<keyword id="KW-0067">ATP-binding</keyword>
<keyword id="KW-1015">Disulfide bond</keyword>
<keyword id="KW-0325">Glycoprotein</keyword>
<keyword id="KW-0418">Kinase</keyword>
<keyword id="KW-0472">Membrane</keyword>
<keyword id="KW-0547">Nucleotide-binding</keyword>
<keyword id="KW-0597">Phosphoprotein</keyword>
<keyword id="KW-0656">Proto-oncogene</keyword>
<keyword id="KW-0675">Receptor</keyword>
<keyword id="KW-0677">Repeat</keyword>
<keyword id="KW-0732">Signal</keyword>
<keyword id="KW-0808">Transferase</keyword>
<keyword id="KW-0812">Transmembrane</keyword>
<keyword id="KW-1133">Transmembrane helix</keyword>
<keyword id="KW-0829">Tyrosine-protein kinase</keyword>
<keyword id="KW-0832">Ubl conjugation</keyword>
<evidence type="ECO:0000250" key="1"/>
<evidence type="ECO:0000250" key="2">
    <source>
        <dbReference type="UniProtKB" id="P08581"/>
    </source>
</evidence>
<evidence type="ECO:0000250" key="3">
    <source>
        <dbReference type="UniProtKB" id="P16056"/>
    </source>
</evidence>
<evidence type="ECO:0000255" key="4"/>
<evidence type="ECO:0000255" key="5">
    <source>
        <dbReference type="PROSITE-ProRule" id="PRU00159"/>
    </source>
</evidence>
<evidence type="ECO:0000255" key="6">
    <source>
        <dbReference type="PROSITE-ProRule" id="PRU00352"/>
    </source>
</evidence>
<evidence type="ECO:0000255" key="7">
    <source>
        <dbReference type="PROSITE-ProRule" id="PRU10028"/>
    </source>
</evidence>
<protein>
    <recommendedName>
        <fullName>Hepatocyte growth factor receptor</fullName>
        <shortName>HGF receptor</shortName>
        <ecNumber>2.7.10.1</ecNumber>
    </recommendedName>
    <alternativeName>
        <fullName>HGF/SF receptor</fullName>
    </alternativeName>
    <alternativeName>
        <fullName>Proto-oncogene c-Met</fullName>
    </alternativeName>
    <alternativeName>
        <fullName>Scatter factor receptor</fullName>
        <shortName>SF receptor</shortName>
    </alternativeName>
    <alternativeName>
        <fullName>Tyrosine-protein kinase Met</fullName>
    </alternativeName>
</protein>
<sequence>MKAPTVLAPGILVLLFTLVQKSNGECREALAKSEMNVNMKYQLPNFTAETPIQNVVLHKHHIYLGAVNYIYVLNDKDLQKVAEYKTGPVLEHPDCVPCQNCSSKANLSGSAWRDNINMALLVDTYYDDQLISCGSVNRGTCQRHVFPPHNTADIQSEVRCMYSPQPEEEPSQCPDCVVSALGTKVLLTVKDRFINFFVGNTINSSYLPDHSLHSISVRRLKETQDGFKFLTDQSYIDVLPEFRDSYPIKYVHAFESNHFIYFLTVQRETLDSQTFHTRIIRFCSVDSGLHSYMEMPLECILTEKRRKRSTRQEVFNILQAAYVSKPGAHLAKQIGASPNDDILYGVFAQSKPDSAEPMNRSAVCAFPIKYVNEFFNKIVNKNNVRCLQHFYGPNHEHCFNRTLLRNSSGCEVRSDEYRTEFTTALQRVDLFMGQFNQVLLTSISTFIKGDLTIANLGTSEGRFMQVVVSRSVLPAPHVNFLLDSNPVSLEALVEDPVNQNGYTLVVTGKKITRIPLDGLGCGHFQSCSQCLSAPPFVQCGWCQDKCVQVEECPNGTWTQEICLPTVYEVFPTSAPLEGGTMLTICGWDFGFRRNNKFDLKKTRVLVGNESCTLTLSESTTNTLKCTVGHAMNENFNMSIIISNGRRTVHYNAFSYVDPIITSIFPKYGPKAGGTLLTLTGKYLNSGNSRHISIGGKTCTLKSVSNSILECYTPAQIISTEFPIKLKIDLANREASSFSYREDPIVYEIHPTKSFLSGGSTITGVGKNLNSVSVTRMVINVHEARKNFTVACQHRSNSEIMCCTTPSLQQLNLQLPLKTRAFFVLDGIYSNYFDLIYVHNPVFKPFEKPVMISMGRENVLEIKGNDIDPEAVKGEVLKVGNKSCENIHSRSQAVLCTVPNDLLKLNSVLYIEWKQAVSSYILGKVIVQSDQSFTGVIVGVVAISIILLLLLGLFLWLKKKKQIKDLGSELVRYDARVHTPHLDRLVSARSVSPTTEMVSNESVDYRATFPEDQFPNSSQNGSCRQVQYPLMDLSPILTSGDSDISSPLLQNVVHIDLSALNPELVQEVQHVVIGPSSLIVHFNEVIGRGHFGCVYHGTLLDSDDKKIHCAVKSLNRITDIGEVSQFLTEGIIMKDFSHPNVLSLLGICLRSEGSPLVVLPYMKHGDLRNFIRNETHNPTVKDLIGFGLQVAKGMKYLASKKFVHRDLAARNCMLDEKFTVKVADFGLARDMYDKEYYSVHNKTGAKLPVKWMALESLQTQKFTTKSDVWSFGVLLWELMTRGAPPYPDVNTFDITVYLLQGRRLLQPEYCPDRLYEVMLKCWHPKAEMRPSFSELVSRISAIFSTFIGEHYVHVNATYVNVKCIAPYPSLLSQDDLDGEVDT</sequence>
<reference key="1">
    <citation type="submission" date="2006-09" db="EMBL/GenBank/DDBJ databases">
        <title>NISC comparative sequencing initiative.</title>
        <authorList>
            <person name="Antonellis A."/>
            <person name="Ayele K."/>
            <person name="Benjamin B."/>
            <person name="Blakesley R.W."/>
            <person name="Boakye A."/>
            <person name="Bouffard G.G."/>
            <person name="Brinkley C."/>
            <person name="Brooks S."/>
            <person name="Chu G."/>
            <person name="Coleman H."/>
            <person name="Engle J."/>
            <person name="Gestole M."/>
            <person name="Greene A."/>
            <person name="Guan X."/>
            <person name="Gupta J."/>
            <person name="Haghighi P."/>
            <person name="Han J."/>
            <person name="Hansen N."/>
            <person name="Ho S.-L."/>
            <person name="Hu P."/>
            <person name="Hunter G."/>
            <person name="Hurle B."/>
            <person name="Idol J.R."/>
            <person name="Kwong P."/>
            <person name="Laric P."/>
            <person name="Larson S."/>
            <person name="Lee-Lin S.-Q."/>
            <person name="Legaspi R."/>
            <person name="Madden M."/>
            <person name="Maduro Q.L."/>
            <person name="Maduro V.B."/>
            <person name="Margulies E.H."/>
            <person name="Masiello C."/>
            <person name="Maskeri B."/>
            <person name="McDowell J."/>
            <person name="Mojidi H.A."/>
            <person name="Mullikin J.C."/>
            <person name="Oestreicher J.S."/>
            <person name="Park M."/>
            <person name="Portnoy M.E."/>
            <person name="Prasad A."/>
            <person name="Puri O."/>
            <person name="Reddix-Dugue N."/>
            <person name="Schandler K."/>
            <person name="Schueler M.G."/>
            <person name="Sison C."/>
            <person name="Stantripop S."/>
            <person name="Stephen E."/>
            <person name="Taye A."/>
            <person name="Thomas J.W."/>
            <person name="Thomas P.J."/>
            <person name="Tsipouri V."/>
            <person name="Ung L."/>
            <person name="Vogt J.L."/>
            <person name="Wetherby K.D."/>
            <person name="Young A."/>
            <person name="Green E.D."/>
        </authorList>
    </citation>
    <scope>NUCLEOTIDE SEQUENCE [LARGE SCALE GENOMIC DNA]</scope>
</reference>
<name>MET_DASNO</name>
<comment type="function">
    <text evidence="1">Receptor tyrosine kinase that transduces signals from the extracellular matrix into the cytoplasm by binding to hepatocyte growth factor/HGF ligand. Regulates many physiological processes including proliferation, scattering, morphogenesis and survival. Ligand binding at the cell surface induces autophosphorylation of MET on its intracellular domain that provides docking sites for downstream signaling molecules. Following activation by ligand, interacts with the PI3-kinase subunit PIK3R1, PLCG1, SRC, GRB2, STAT3 or the adapter GAB1. Recruitment of these downstream effectors by MET leads to the activation of several signaling cascades including the RAS-ERK, PI3 kinase-AKT, or PLCgamma-PKC. The RAS-ERK activation is associated with the morphogenetic effects while PI3K/AKT coordinates prosurvival effects. During embryonic development, MET signaling plays a role in gastrulation, development and migration of muscles and neuronal precursors, angiogenesis and kidney formation. In adults, participates in wound healing as well as organ regeneration and tissue remodeling. Also promotes differentiation and proliferation of hematopoietic cells (By similarity).</text>
</comment>
<comment type="catalytic activity">
    <reaction evidence="7">
        <text>L-tyrosyl-[protein] + ATP = O-phospho-L-tyrosyl-[protein] + ADP + H(+)</text>
        <dbReference type="Rhea" id="RHEA:10596"/>
        <dbReference type="Rhea" id="RHEA-COMP:10136"/>
        <dbReference type="Rhea" id="RHEA-COMP:20101"/>
        <dbReference type="ChEBI" id="CHEBI:15378"/>
        <dbReference type="ChEBI" id="CHEBI:30616"/>
        <dbReference type="ChEBI" id="CHEBI:46858"/>
        <dbReference type="ChEBI" id="CHEBI:61978"/>
        <dbReference type="ChEBI" id="CHEBI:456216"/>
        <dbReference type="EC" id="2.7.10.1"/>
    </reaction>
</comment>
<comment type="activity regulation">
    <text evidence="1">In its inactive state, the C-terminal tail interacts with the catalytic domain and inhibits the kinase activity. Upon ligand binding, the C-terminal tail is displaced and becomes phosphorylated, thus increasing the kinase activity (By similarity).</text>
</comment>
<comment type="subunit">
    <text evidence="2 3">Heterodimer made of an alpha chain (50 kDa) and a beta chain (145 kDa) which are disulfide linked. Binds PLXNB1. Interacts when phosphorylated with downstream effectors including STAT3, PIK3R1, SRC, PCLG1, GRB2 and GAB1. Interacts with SPSB1, SPSB2 and SPSB4. Interacts with INPP5D/SHIP1. When phosphorylated at Tyr-1357, interacts with INPPL1/SHIP2. Interacts with RANBP9 and RANBP10, as well as SPSB1, SPSB2, SPSB3 and SPSB4. SPSB1 binding occurs in the presence and in the absence of HGF, however HGF treatment has a positive effect on this interaction. Interacts with MUC20; prevents interaction with GRB2 and suppresses hepatocyte growth factor-induced cell proliferation. Interacts with GRB10. Interacts with PTPN1 and PTPN2. Interacts with HSP90AA1 and HSP90AB1; the interaction suppresses MET kinase activity. Interacts with tensin TNS3 (By similarity). Interacts (when phosphorylated) with tensin TNS4 (via SH2 domain); the interaction increases MET protein stability by inhibiting MET endocytosis and subsequent lysosomal degradation (By similarity).</text>
</comment>
<comment type="subcellular location">
    <subcellularLocation>
        <location evidence="1">Membrane</location>
        <topology evidence="1">Single-pass type I membrane protein</topology>
    </subcellularLocation>
</comment>
<comment type="domain">
    <text evidence="1">The kinase domain is involved in SPSB1 binding.</text>
</comment>
<comment type="domain">
    <text evidence="1">The beta-propeller Sema domain mediates binding to HGF.</text>
</comment>
<comment type="PTM">
    <text evidence="2">Autophosphorylated in response to ligand binding on Tyr-1235 and Tyr-1236 in the kinase domain leading to further phosphorylation of Tyr-1350 and Tyr-1357 in the C-terminal multifunctional docking site. Dephosphorylated by PTPRJ at Tyr-1350 and Tyr-1366. Dephosphorylated by PTPN1 and PTPN2 (By similarity).</text>
</comment>
<comment type="PTM">
    <text evidence="2">Ubiquitinated. Ubiquitination by CBL regulates the receptor stability and activity through proteasomal degradation (By similarity).</text>
</comment>
<comment type="PTM">
    <text evidence="2">O-mannosylation of IPT/TIG domains by TMEM260 is required for protein maturation. O-mannosylated residues are composed of single mannose glycans that are not elongated or modified.</text>
</comment>
<comment type="similarity">
    <text evidence="5">Belongs to the protein kinase superfamily. Tyr protein kinase family.</text>
</comment>
<feature type="signal peptide" evidence="4">
    <location>
        <begin position="1"/>
        <end position="24"/>
    </location>
</feature>
<feature type="chain" id="PRO_0000260421" description="Hepatocyte growth factor receptor">
    <location>
        <begin position="25"/>
        <end position="1381"/>
    </location>
</feature>
<feature type="topological domain" description="Extracellular" evidence="4">
    <location>
        <begin position="25"/>
        <end position="933"/>
    </location>
</feature>
<feature type="transmembrane region" description="Helical" evidence="4">
    <location>
        <begin position="934"/>
        <end position="956"/>
    </location>
</feature>
<feature type="topological domain" description="Cytoplasmic" evidence="4">
    <location>
        <begin position="957"/>
        <end position="1381"/>
    </location>
</feature>
<feature type="domain" description="Sema" evidence="6">
    <location>
        <begin position="27"/>
        <end position="516"/>
    </location>
</feature>
<feature type="domain" description="IPT/TIG 1">
    <location>
        <begin position="564"/>
        <end position="656"/>
    </location>
</feature>
<feature type="domain" description="IPT/TIG 2">
    <location>
        <begin position="658"/>
        <end position="740"/>
    </location>
</feature>
<feature type="domain" description="IPT/TIG 3">
    <location>
        <begin position="743"/>
        <end position="837"/>
    </location>
</feature>
<feature type="domain" description="Protein kinase" evidence="5">
    <location>
        <begin position="1079"/>
        <end position="1346"/>
    </location>
</feature>
<feature type="region of interest" description="Interaction with RANBP9" evidence="1">
    <location>
        <begin position="1213"/>
        <end position="1381"/>
    </location>
</feature>
<feature type="region of interest" description="Interaction with MUC20" evidence="1">
    <location>
        <begin position="1321"/>
        <end position="1360"/>
    </location>
</feature>
<feature type="active site" description="Proton acceptor" evidence="5 7">
    <location>
        <position position="1205"/>
    </location>
</feature>
<feature type="binding site" evidence="5">
    <location>
        <begin position="1085"/>
        <end position="1093"/>
    </location>
    <ligand>
        <name>ATP</name>
        <dbReference type="ChEBI" id="CHEBI:30616"/>
    </ligand>
</feature>
<feature type="binding site" evidence="5">
    <location>
        <position position="1111"/>
    </location>
    <ligand>
        <name>ATP</name>
        <dbReference type="ChEBI" id="CHEBI:30616"/>
    </ligand>
</feature>
<feature type="site" description="Cleavage" evidence="4">
    <location>
        <begin position="308"/>
        <end position="309"/>
    </location>
</feature>
<feature type="modified residue" description="Phosphoserine" evidence="2">
    <location>
        <position position="967"/>
    </location>
</feature>
<feature type="modified residue" description="Phosphothreonine" evidence="2">
    <location>
        <position position="978"/>
    </location>
</feature>
<feature type="modified residue" description="Phosphoserine" evidence="2">
    <location>
        <position position="991"/>
    </location>
</feature>
<feature type="modified residue" description="Phosphoserine" evidence="2">
    <location>
        <position position="998"/>
    </location>
</feature>
<feature type="modified residue" description="Phosphoserine" evidence="2">
    <location>
        <position position="1001"/>
    </location>
</feature>
<feature type="modified residue" description="Phosphotyrosine" evidence="2">
    <location>
        <position position="1004"/>
    </location>
</feature>
<feature type="modified residue" description="Phosphotyrosine" evidence="2">
    <location>
        <position position="1231"/>
    </location>
</feature>
<feature type="modified residue" description="Phosphotyrosine; by autocatalysis" evidence="2">
    <location>
        <position position="1235"/>
    </location>
</feature>
<feature type="modified residue" description="Phosphotyrosine; by autocatalysis" evidence="2">
    <location>
        <position position="1236"/>
    </location>
</feature>
<feature type="modified residue" description="Phosphothreonine" evidence="2">
    <location>
        <position position="1290"/>
    </location>
</feature>
<feature type="modified residue" description="Phosphotyrosine; by autocatalysis" evidence="2">
    <location>
        <position position="1350"/>
    </location>
</feature>
<feature type="modified residue" description="Phosphotyrosine; by autocatalysis" evidence="2">
    <location>
        <position position="1357"/>
    </location>
</feature>
<feature type="modified residue" description="Phosphotyrosine" evidence="2">
    <location>
        <position position="1366"/>
    </location>
</feature>
<feature type="glycosylation site" description="N-linked (GlcNAc...) asparagine" evidence="4">
    <location>
        <position position="45"/>
    </location>
</feature>
<feature type="glycosylation site" description="N-linked (GlcNAc...) asparagine" evidence="4">
    <location>
        <position position="100"/>
    </location>
</feature>
<feature type="glycosylation site" description="N-linked (GlcNAc...) asparagine" evidence="4">
    <location>
        <position position="106"/>
    </location>
</feature>
<feature type="glycosylation site" description="N-linked (GlcNAc...) asparagine" evidence="4">
    <location>
        <position position="203"/>
    </location>
</feature>
<feature type="glycosylation site" description="N-linked (GlcNAc...) asparagine" evidence="4">
    <location>
        <position position="359"/>
    </location>
</feature>
<feature type="glycosylation site" description="N-linked (GlcNAc...) asparagine" evidence="4">
    <location>
        <position position="400"/>
    </location>
</feature>
<feature type="glycosylation site" description="N-linked (GlcNAc...) asparagine" evidence="4">
    <location>
        <position position="406"/>
    </location>
</feature>
<feature type="glycosylation site" description="N-linked (GlcNAc...) asparagine" evidence="4">
    <location>
        <position position="554"/>
    </location>
</feature>
<feature type="glycosylation site" description="O-linked (Man) threonine" evidence="2">
    <location>
        <position position="583"/>
    </location>
</feature>
<feature type="glycosylation site" description="N-linked (GlcNAc...) asparagine" evidence="4">
    <location>
        <position position="608"/>
    </location>
</feature>
<feature type="glycosylation site" description="N-linked (GlcNAc...) asparagine" evidence="4">
    <location>
        <position position="636"/>
    </location>
</feature>
<feature type="glycosylation site" description="O-linked (Man) threonine" evidence="2">
    <location>
        <position position="677"/>
    </location>
</feature>
<feature type="glycosylation site" description="O-linked (Man) threonine" evidence="2">
    <location>
        <position position="762"/>
    </location>
</feature>
<feature type="glycosylation site" description="N-linked (GlcNAc...) asparagine" evidence="4">
    <location>
        <position position="786"/>
    </location>
</feature>
<feature type="glycosylation site" description="N-linked (GlcNAc...) asparagine" evidence="4">
    <location>
        <position position="880"/>
    </location>
</feature>
<feature type="disulfide bond" evidence="6">
    <location>
        <begin position="95"/>
        <end position="101"/>
    </location>
</feature>
<feature type="disulfide bond" evidence="6">
    <location>
        <begin position="98"/>
        <end position="160"/>
    </location>
</feature>
<feature type="disulfide bond" evidence="6">
    <location>
        <begin position="133"/>
        <end position="141"/>
    </location>
</feature>
<feature type="disulfide bond" evidence="6">
    <location>
        <begin position="173"/>
        <end position="176"/>
    </location>
</feature>
<feature type="disulfide bond" evidence="6">
    <location>
        <begin position="299"/>
        <end position="364"/>
    </location>
</feature>
<feature type="disulfide bond" evidence="6">
    <location>
        <begin position="386"/>
        <end position="398"/>
    </location>
</feature>
<feature type="disulfide bond" evidence="6">
    <location>
        <begin position="521"/>
        <end position="539"/>
    </location>
</feature>
<feature type="disulfide bond" evidence="6">
    <location>
        <begin position="527"/>
        <end position="562"/>
    </location>
</feature>
<feature type="disulfide bond" evidence="6">
    <location>
        <begin position="530"/>
        <end position="546"/>
    </location>
</feature>
<feature type="disulfide bond" evidence="6">
    <location>
        <begin position="542"/>
        <end position="552"/>
    </location>
</feature>
<dbReference type="EC" id="2.7.10.1"/>
<dbReference type="EMBL" id="DP000181">
    <property type="protein sequence ID" value="ABI93628.1"/>
    <property type="molecule type" value="Genomic_DNA"/>
</dbReference>
<dbReference type="RefSeq" id="NP_001268693.1">
    <property type="nucleotide sequence ID" value="NM_001281764.1"/>
</dbReference>
<dbReference type="RefSeq" id="XP_004449348.1">
    <property type="nucleotide sequence ID" value="XM_004449291.2"/>
</dbReference>
<dbReference type="SMR" id="Q07E48"/>
<dbReference type="GlyCosmos" id="Q07E48">
    <property type="glycosylation" value="12 sites, No reported glycans"/>
</dbReference>
<dbReference type="GeneID" id="101437323"/>
<dbReference type="KEGG" id="dnm:101437323"/>
<dbReference type="CTD" id="4233"/>
<dbReference type="HOGENOM" id="CLU_005158_0_0_1"/>
<dbReference type="OrthoDB" id="9985181at2759"/>
<dbReference type="GO" id="GO:0005886">
    <property type="term" value="C:plasma membrane"/>
    <property type="evidence" value="ECO:0007669"/>
    <property type="project" value="TreeGrafter"/>
</dbReference>
<dbReference type="GO" id="GO:0002116">
    <property type="term" value="C:semaphorin receptor complex"/>
    <property type="evidence" value="ECO:0007669"/>
    <property type="project" value="TreeGrafter"/>
</dbReference>
<dbReference type="GO" id="GO:0005524">
    <property type="term" value="F:ATP binding"/>
    <property type="evidence" value="ECO:0007669"/>
    <property type="project" value="UniProtKB-KW"/>
</dbReference>
<dbReference type="GO" id="GO:0017154">
    <property type="term" value="F:semaphorin receptor activity"/>
    <property type="evidence" value="ECO:0007669"/>
    <property type="project" value="InterPro"/>
</dbReference>
<dbReference type="GO" id="GO:0004714">
    <property type="term" value="F:transmembrane receptor protein tyrosine kinase activity"/>
    <property type="evidence" value="ECO:0007669"/>
    <property type="project" value="UniProtKB-EC"/>
</dbReference>
<dbReference type="GO" id="GO:0007169">
    <property type="term" value="P:cell surface receptor protein tyrosine kinase signaling pathway"/>
    <property type="evidence" value="ECO:0007669"/>
    <property type="project" value="InterPro"/>
</dbReference>
<dbReference type="GO" id="GO:0050918">
    <property type="term" value="P:positive chemotaxis"/>
    <property type="evidence" value="ECO:0000250"/>
    <property type="project" value="UniProtKB"/>
</dbReference>
<dbReference type="GO" id="GO:2001028">
    <property type="term" value="P:positive regulation of endothelial cell chemotaxis"/>
    <property type="evidence" value="ECO:0000250"/>
    <property type="project" value="UniProtKB"/>
</dbReference>
<dbReference type="GO" id="GO:0071526">
    <property type="term" value="P:semaphorin-plexin signaling pathway"/>
    <property type="evidence" value="ECO:0000250"/>
    <property type="project" value="UniProtKB"/>
</dbReference>
<dbReference type="CDD" id="cd00603">
    <property type="entry name" value="IPT_PCSR"/>
    <property type="match status" value="1"/>
</dbReference>
<dbReference type="CDD" id="cd01180">
    <property type="entry name" value="IPT_plexin_repeat1"/>
    <property type="match status" value="1"/>
</dbReference>
<dbReference type="CDD" id="cd01179">
    <property type="entry name" value="IPT_plexin_repeat2"/>
    <property type="match status" value="1"/>
</dbReference>
<dbReference type="CDD" id="cd05058">
    <property type="entry name" value="PTKc_Met_Ron"/>
    <property type="match status" value="1"/>
</dbReference>
<dbReference type="FunFam" id="1.10.510.10:FF:000093">
    <property type="entry name" value="Hepatocyte growth factor receptor"/>
    <property type="match status" value="1"/>
</dbReference>
<dbReference type="FunFam" id="2.130.10.10:FF:000088">
    <property type="entry name" value="Hepatocyte growth factor receptor"/>
    <property type="match status" value="1"/>
</dbReference>
<dbReference type="FunFam" id="2.60.40.10:FF:000213">
    <property type="entry name" value="Hepatocyte growth factor receptor"/>
    <property type="match status" value="1"/>
</dbReference>
<dbReference type="FunFam" id="2.60.40.10:FF:000400">
    <property type="entry name" value="Hepatocyte growth factor receptor"/>
    <property type="match status" value="1"/>
</dbReference>
<dbReference type="FunFam" id="2.60.40.10:FF:002708">
    <property type="entry name" value="Hepatocyte growth factor receptor"/>
    <property type="match status" value="1"/>
</dbReference>
<dbReference type="FunFam" id="3.30.200.20:FF:000188">
    <property type="entry name" value="Hepatocyte growth factor receptor"/>
    <property type="match status" value="1"/>
</dbReference>
<dbReference type="FunFam" id="3.30.1680.10:FF:000006">
    <property type="entry name" value="Macrophage-stimulating 1 receptor b"/>
    <property type="match status" value="1"/>
</dbReference>
<dbReference type="Gene3D" id="2.60.40.10">
    <property type="entry name" value="Immunoglobulins"/>
    <property type="match status" value="3"/>
</dbReference>
<dbReference type="Gene3D" id="3.30.200.20">
    <property type="entry name" value="Phosphorylase Kinase, domain 1"/>
    <property type="match status" value="1"/>
</dbReference>
<dbReference type="Gene3D" id="1.10.510.10">
    <property type="entry name" value="Transferase(Phosphotransferase) domain 1"/>
    <property type="match status" value="1"/>
</dbReference>
<dbReference type="Gene3D" id="2.130.10.10">
    <property type="entry name" value="YVTN repeat-like/Quinoprotein amine dehydrogenase"/>
    <property type="match status" value="1"/>
</dbReference>
<dbReference type="InterPro" id="IPR013783">
    <property type="entry name" value="Ig-like_fold"/>
</dbReference>
<dbReference type="InterPro" id="IPR014756">
    <property type="entry name" value="Ig_E-set"/>
</dbReference>
<dbReference type="InterPro" id="IPR002909">
    <property type="entry name" value="IPT_dom"/>
</dbReference>
<dbReference type="InterPro" id="IPR011009">
    <property type="entry name" value="Kinase-like_dom_sf"/>
</dbReference>
<dbReference type="InterPro" id="IPR031148">
    <property type="entry name" value="Plexin"/>
</dbReference>
<dbReference type="InterPro" id="IPR002165">
    <property type="entry name" value="Plexin_repeat"/>
</dbReference>
<dbReference type="InterPro" id="IPR000719">
    <property type="entry name" value="Prot_kinase_dom"/>
</dbReference>
<dbReference type="InterPro" id="IPR017441">
    <property type="entry name" value="Protein_kinase_ATP_BS"/>
</dbReference>
<dbReference type="InterPro" id="IPR016201">
    <property type="entry name" value="PSI"/>
</dbReference>
<dbReference type="InterPro" id="IPR001627">
    <property type="entry name" value="Semap_dom"/>
</dbReference>
<dbReference type="InterPro" id="IPR036352">
    <property type="entry name" value="Semap_dom_sf"/>
</dbReference>
<dbReference type="InterPro" id="IPR001245">
    <property type="entry name" value="Ser-Thr/Tyr_kinase_cat_dom"/>
</dbReference>
<dbReference type="InterPro" id="IPR008266">
    <property type="entry name" value="Tyr_kinase_AS"/>
</dbReference>
<dbReference type="InterPro" id="IPR020635">
    <property type="entry name" value="Tyr_kinase_cat_dom"/>
</dbReference>
<dbReference type="InterPro" id="IPR016244">
    <property type="entry name" value="Tyr_kinase_HGF/MSP_rcpt"/>
</dbReference>
<dbReference type="InterPro" id="IPR015943">
    <property type="entry name" value="WD40/YVTN_repeat-like_dom_sf"/>
</dbReference>
<dbReference type="PANTHER" id="PTHR22625:SF61">
    <property type="entry name" value="HEPATOCYTE GROWTH FACTOR RECEPTOR"/>
    <property type="match status" value="1"/>
</dbReference>
<dbReference type="PANTHER" id="PTHR22625">
    <property type="entry name" value="PLEXIN"/>
    <property type="match status" value="1"/>
</dbReference>
<dbReference type="Pfam" id="PF07714">
    <property type="entry name" value="PK_Tyr_Ser-Thr"/>
    <property type="match status" value="1"/>
</dbReference>
<dbReference type="Pfam" id="PF01437">
    <property type="entry name" value="PSI"/>
    <property type="match status" value="1"/>
</dbReference>
<dbReference type="Pfam" id="PF01403">
    <property type="entry name" value="Sema"/>
    <property type="match status" value="1"/>
</dbReference>
<dbReference type="Pfam" id="PF01833">
    <property type="entry name" value="TIG"/>
    <property type="match status" value="3"/>
</dbReference>
<dbReference type="PIRSF" id="PIRSF000617">
    <property type="entry name" value="TyrPK_HGF-R"/>
    <property type="match status" value="1"/>
</dbReference>
<dbReference type="PRINTS" id="PR00109">
    <property type="entry name" value="TYRKINASE"/>
</dbReference>
<dbReference type="SMART" id="SM00429">
    <property type="entry name" value="IPT"/>
    <property type="match status" value="4"/>
</dbReference>
<dbReference type="SMART" id="SM00423">
    <property type="entry name" value="PSI"/>
    <property type="match status" value="1"/>
</dbReference>
<dbReference type="SMART" id="SM00630">
    <property type="entry name" value="Sema"/>
    <property type="match status" value="1"/>
</dbReference>
<dbReference type="SMART" id="SM00219">
    <property type="entry name" value="TyrKc"/>
    <property type="match status" value="1"/>
</dbReference>
<dbReference type="SUPFAM" id="SSF81296">
    <property type="entry name" value="E set domains"/>
    <property type="match status" value="3"/>
</dbReference>
<dbReference type="SUPFAM" id="SSF103575">
    <property type="entry name" value="Plexin repeat"/>
    <property type="match status" value="1"/>
</dbReference>
<dbReference type="SUPFAM" id="SSF56112">
    <property type="entry name" value="Protein kinase-like (PK-like)"/>
    <property type="match status" value="1"/>
</dbReference>
<dbReference type="SUPFAM" id="SSF101912">
    <property type="entry name" value="Sema domain"/>
    <property type="match status" value="1"/>
</dbReference>
<dbReference type="PROSITE" id="PS00107">
    <property type="entry name" value="PROTEIN_KINASE_ATP"/>
    <property type="match status" value="1"/>
</dbReference>
<dbReference type="PROSITE" id="PS50011">
    <property type="entry name" value="PROTEIN_KINASE_DOM"/>
    <property type="match status" value="1"/>
</dbReference>
<dbReference type="PROSITE" id="PS00109">
    <property type="entry name" value="PROTEIN_KINASE_TYR"/>
    <property type="match status" value="1"/>
</dbReference>
<dbReference type="PROSITE" id="PS51004">
    <property type="entry name" value="SEMA"/>
    <property type="match status" value="1"/>
</dbReference>
<organism>
    <name type="scientific">Dasypus novemcinctus</name>
    <name type="common">Nine-banded armadillo</name>
    <dbReference type="NCBI Taxonomy" id="9361"/>
    <lineage>
        <taxon>Eukaryota</taxon>
        <taxon>Metazoa</taxon>
        <taxon>Chordata</taxon>
        <taxon>Craniata</taxon>
        <taxon>Vertebrata</taxon>
        <taxon>Euteleostomi</taxon>
        <taxon>Mammalia</taxon>
        <taxon>Eutheria</taxon>
        <taxon>Xenarthra</taxon>
        <taxon>Cingulata</taxon>
        <taxon>Dasypodidae</taxon>
        <taxon>Dasypus</taxon>
    </lineage>
</organism>
<proteinExistence type="inferred from homology"/>
<gene>
    <name type="primary">MET</name>
</gene>
<accession>Q07E48</accession>